<sequence length="295" mass="30985">MSKPRKQHGVVVGVDGSLESDAAACWGATDAAMRNIPLTVVHVVNADVATWPPMPYPETWGVWQEDEGRQIVANAVKLAKEAVGADRKLSVKSELVFSTPVPTMVEISNEAEMVVLGSSGRGALARGLLGSVSSSLVRRAGCPVAVIHSDDAVIPDPQHAPVLVGIDGSPVSELATAVAFDEASRRGVELIAVHAWSDVEVVELPGLDFSAVQQEAELSLAERLAGWQERYPDVPVSRVVVCDRPARKLVQKSASAQLVVVGSHGRGGLTGMLLGSVSNAVLHAARVPVIVARQS</sequence>
<dbReference type="EMBL" id="AL123456">
    <property type="protein sequence ID" value="CCP44777.1"/>
    <property type="molecule type" value="Genomic_DNA"/>
</dbReference>
<dbReference type="PIR" id="C70759">
    <property type="entry name" value="C70759"/>
</dbReference>
<dbReference type="RefSeq" id="NP_216521.1">
    <property type="nucleotide sequence ID" value="NC_000962.3"/>
</dbReference>
<dbReference type="RefSeq" id="WP_003410060.1">
    <property type="nucleotide sequence ID" value="NZ_NVQJ01000043.1"/>
</dbReference>
<dbReference type="SMR" id="P9WLN1"/>
<dbReference type="FunCoup" id="P9WLN1">
    <property type="interactions" value="3"/>
</dbReference>
<dbReference type="STRING" id="83332.Rv2005c"/>
<dbReference type="PaxDb" id="83332-Rv2005c"/>
<dbReference type="DNASU" id="888831"/>
<dbReference type="GeneID" id="888831"/>
<dbReference type="KEGG" id="mtu:Rv2005c"/>
<dbReference type="KEGG" id="mtv:RVBD_2005c"/>
<dbReference type="TubercuList" id="Rv2005c"/>
<dbReference type="eggNOG" id="COG0589">
    <property type="taxonomic scope" value="Bacteria"/>
</dbReference>
<dbReference type="InParanoid" id="P9WLN1"/>
<dbReference type="OrthoDB" id="3174546at2"/>
<dbReference type="PhylomeDB" id="P9WLN1"/>
<dbReference type="Proteomes" id="UP000001584">
    <property type="component" value="Chromosome"/>
</dbReference>
<dbReference type="GO" id="GO:0009274">
    <property type="term" value="C:peptidoglycan-based cell wall"/>
    <property type="evidence" value="ECO:0007005"/>
    <property type="project" value="MTBBASE"/>
</dbReference>
<dbReference type="GO" id="GO:0005886">
    <property type="term" value="C:plasma membrane"/>
    <property type="evidence" value="ECO:0007005"/>
    <property type="project" value="MTBBASE"/>
</dbReference>
<dbReference type="GO" id="GO:0005524">
    <property type="term" value="F:ATP binding"/>
    <property type="evidence" value="ECO:0007669"/>
    <property type="project" value="UniProtKB-KW"/>
</dbReference>
<dbReference type="GO" id="GO:0046677">
    <property type="term" value="P:response to antibiotic"/>
    <property type="evidence" value="ECO:0007669"/>
    <property type="project" value="UniProtKB-KW"/>
</dbReference>
<dbReference type="GO" id="GO:0001666">
    <property type="term" value="P:response to hypoxia"/>
    <property type="evidence" value="ECO:0000270"/>
    <property type="project" value="MTBBASE"/>
</dbReference>
<dbReference type="CDD" id="cd23944">
    <property type="entry name" value="USP_Rv2623_repeat1"/>
    <property type="match status" value="1"/>
</dbReference>
<dbReference type="FunFam" id="3.40.50.620:FF:000123">
    <property type="entry name" value="Universal stress protein family"/>
    <property type="match status" value="2"/>
</dbReference>
<dbReference type="Gene3D" id="3.40.50.620">
    <property type="entry name" value="HUPs"/>
    <property type="match status" value="2"/>
</dbReference>
<dbReference type="InterPro" id="IPR014729">
    <property type="entry name" value="Rossmann-like_a/b/a_fold"/>
</dbReference>
<dbReference type="InterPro" id="IPR006015">
    <property type="entry name" value="Universal_stress_UspA"/>
</dbReference>
<dbReference type="InterPro" id="IPR006016">
    <property type="entry name" value="UspA"/>
</dbReference>
<dbReference type="PANTHER" id="PTHR46268">
    <property type="entry name" value="STRESS RESPONSE PROTEIN NHAX"/>
    <property type="match status" value="1"/>
</dbReference>
<dbReference type="PANTHER" id="PTHR46268:SF27">
    <property type="entry name" value="UNIVERSAL STRESS PROTEIN RV2623"/>
    <property type="match status" value="1"/>
</dbReference>
<dbReference type="Pfam" id="PF00582">
    <property type="entry name" value="Usp"/>
    <property type="match status" value="2"/>
</dbReference>
<dbReference type="PRINTS" id="PR01438">
    <property type="entry name" value="UNVRSLSTRESS"/>
</dbReference>
<dbReference type="SUPFAM" id="SSF52402">
    <property type="entry name" value="Adenine nucleotide alpha hydrolases-like"/>
    <property type="match status" value="2"/>
</dbReference>
<accession>P9WLN1</accession>
<accession>L0T8C5</accession>
<accession>P64921</accession>
<accession>Q10851</accession>
<organism>
    <name type="scientific">Mycobacterium tuberculosis (strain ATCC 25618 / H37Rv)</name>
    <dbReference type="NCBI Taxonomy" id="83332"/>
    <lineage>
        <taxon>Bacteria</taxon>
        <taxon>Bacillati</taxon>
        <taxon>Actinomycetota</taxon>
        <taxon>Actinomycetes</taxon>
        <taxon>Mycobacteriales</taxon>
        <taxon>Mycobacteriaceae</taxon>
        <taxon>Mycobacterium</taxon>
        <taxon>Mycobacterium tuberculosis complex</taxon>
    </lineage>
</organism>
<evidence type="ECO:0000250" key="1">
    <source>
        <dbReference type="UniProtKB" id="P9WFD7"/>
    </source>
</evidence>
<evidence type="ECO:0000269" key="2">
    <source>
    </source>
</evidence>
<evidence type="ECO:0000269" key="3">
    <source>
    </source>
</evidence>
<evidence type="ECO:0000269" key="4">
    <source>
    </source>
</evidence>
<evidence type="ECO:0000269" key="5">
    <source>
    </source>
</evidence>
<evidence type="ECO:0000269" key="6">
    <source>
    </source>
</evidence>
<evidence type="ECO:0000269" key="7">
    <source>
    </source>
</evidence>
<evidence type="ECO:0000269" key="8">
    <source>
    </source>
</evidence>
<evidence type="ECO:0000305" key="9"/>
<name>Y2005_MYCTU</name>
<proteinExistence type="evidence at protein level"/>
<feature type="chain" id="PRO_0000103934" description="Universal stress protein Rv2005c">
    <location>
        <begin position="1"/>
        <end position="295"/>
    </location>
</feature>
<feature type="binding site" evidence="1">
    <location>
        <position position="13"/>
    </location>
    <ligand>
        <name>ATP</name>
        <dbReference type="ChEBI" id="CHEBI:30616"/>
        <label>1</label>
    </ligand>
</feature>
<feature type="binding site" evidence="1">
    <location>
        <begin position="117"/>
        <end position="123"/>
    </location>
    <ligand>
        <name>ATP</name>
        <dbReference type="ChEBI" id="CHEBI:30616"/>
        <label>1</label>
    </ligand>
</feature>
<feature type="binding site" evidence="1">
    <location>
        <begin position="131"/>
        <end position="132"/>
    </location>
    <ligand>
        <name>ATP</name>
        <dbReference type="ChEBI" id="CHEBI:30616"/>
        <label>1</label>
    </ligand>
</feature>
<feature type="binding site" evidence="1">
    <location>
        <position position="165"/>
    </location>
    <ligand>
        <name>ATP</name>
        <dbReference type="ChEBI" id="CHEBI:30616"/>
        <label>2</label>
    </ligand>
</feature>
<feature type="binding site" evidence="1">
    <location>
        <position position="198"/>
    </location>
    <ligand>
        <name>ATP</name>
        <dbReference type="ChEBI" id="CHEBI:30616"/>
        <label>2</label>
    </ligand>
</feature>
<feature type="binding site" evidence="1">
    <location>
        <begin position="262"/>
        <end position="268"/>
    </location>
    <ligand>
        <name>ATP</name>
        <dbReference type="ChEBI" id="CHEBI:30616"/>
        <label>2</label>
    </ligand>
</feature>
<feature type="binding site" evidence="1">
    <location>
        <begin position="276"/>
        <end position="278"/>
    </location>
    <ligand>
        <name>ATP</name>
        <dbReference type="ChEBI" id="CHEBI:30616"/>
        <label>2</label>
    </ligand>
</feature>
<gene>
    <name type="ordered locus">Rv2005c</name>
    <name type="ORF">MTCY39.12</name>
</gene>
<reference key="1">
    <citation type="journal article" date="1998" name="Nature">
        <title>Deciphering the biology of Mycobacterium tuberculosis from the complete genome sequence.</title>
        <authorList>
            <person name="Cole S.T."/>
            <person name="Brosch R."/>
            <person name="Parkhill J."/>
            <person name="Garnier T."/>
            <person name="Churcher C.M."/>
            <person name="Harris D.E."/>
            <person name="Gordon S.V."/>
            <person name="Eiglmeier K."/>
            <person name="Gas S."/>
            <person name="Barry C.E. III"/>
            <person name="Tekaia F."/>
            <person name="Badcock K."/>
            <person name="Basham D."/>
            <person name="Brown D."/>
            <person name="Chillingworth T."/>
            <person name="Connor R."/>
            <person name="Davies R.M."/>
            <person name="Devlin K."/>
            <person name="Feltwell T."/>
            <person name="Gentles S."/>
            <person name="Hamlin N."/>
            <person name="Holroyd S."/>
            <person name="Hornsby T."/>
            <person name="Jagels K."/>
            <person name="Krogh A."/>
            <person name="McLean J."/>
            <person name="Moule S."/>
            <person name="Murphy L.D."/>
            <person name="Oliver S."/>
            <person name="Osborne J."/>
            <person name="Quail M.A."/>
            <person name="Rajandream M.A."/>
            <person name="Rogers J."/>
            <person name="Rutter S."/>
            <person name="Seeger K."/>
            <person name="Skelton S."/>
            <person name="Squares S."/>
            <person name="Squares R."/>
            <person name="Sulston J.E."/>
            <person name="Taylor K."/>
            <person name="Whitehead S."/>
            <person name="Barrell B.G."/>
        </authorList>
    </citation>
    <scope>NUCLEOTIDE SEQUENCE [LARGE SCALE GENOMIC DNA]</scope>
    <source>
        <strain>ATCC 25618 / H37Rv</strain>
    </source>
</reference>
<reference key="2">
    <citation type="journal article" date="2001" name="Proc. Natl. Acad. Sci. U.S.A.">
        <title>Regulation of the Mycobacterium tuberculosis hypoxic response gene encoding alpha -crystallin.</title>
        <authorList>
            <person name="Sherman D.R."/>
            <person name="Voskuil M."/>
            <person name="Schnappinger D."/>
            <person name="Liao R."/>
            <person name="Harrell M.I."/>
            <person name="Schoolnik G.K."/>
        </authorList>
    </citation>
    <scope>INDUCTION BY HYPOXIA</scope>
    <source>
        <strain>ATCC 25618 / H37Rv</strain>
    </source>
</reference>
<reference key="3">
    <citation type="journal article" date="2003" name="J. Exp. Med.">
        <title>Inhibition of respiration by nitric oxide induces a Mycobacterium tuberculosis dormancy program.</title>
        <authorList>
            <person name="Voskuil M.I."/>
            <person name="Schnappinger D."/>
            <person name="Visconti K.C."/>
            <person name="Harrell M.I."/>
            <person name="Dolganov G.M."/>
            <person name="Sherman D.R."/>
            <person name="Schoolnik G.K."/>
        </authorList>
    </citation>
    <scope>INDUCTION BY NITRIC OXIDE (NO) AND BY HYPOXIA</scope>
    <scope>DORMANCY REGULON</scope>
    <source>
        <strain>ATCC 25618 / H37Rv</strain>
    </source>
</reference>
<reference key="4">
    <citation type="journal article" date="2004" name="Microbiology">
        <title>Comparative proteome analysis of Mycobacterium tuberculosis grown under aerobic and anaerobic conditions.</title>
        <authorList>
            <person name="Starck J."/>
            <person name="Kallenius G."/>
            <person name="Marklund B.I."/>
            <person name="Andersson D.I."/>
            <person name="Akerlund T."/>
        </authorList>
    </citation>
    <scope>INDUCTION BY ANAEROBISIS</scope>
    <scope>IDENTIFICATION BY MASS SPECTROMETRY</scope>
    <source>
        <strain>S-02293 Harlingen</strain>
    </source>
</reference>
<reference key="5">
    <citation type="journal article" date="2008" name="Cell Host Microbe">
        <title>Mycobacterium tuberculosis senses host-derived carbon monoxide during macrophage infection.</title>
        <authorList>
            <person name="Shiloh M.U."/>
            <person name="Manzanillo P."/>
            <person name="Cox J.S."/>
        </authorList>
    </citation>
    <scope>INDUCTION BY CARBON MONOXIDE (CO)</scope>
    <source>
        <strain>ATCC 35801 / TMC 107 / Erdman</strain>
    </source>
</reference>
<reference key="6">
    <citation type="journal article" date="2008" name="J. Biol. Chem.">
        <title>Heme oxygenase-1-derived carbon monoxide induces the Mycobacterium tuberculosis dormancy regulon.</title>
        <authorList>
            <person name="Kumar A."/>
            <person name="Deshane J.S."/>
            <person name="Crossman D.K."/>
            <person name="Bolisetty S."/>
            <person name="Yan B.S."/>
            <person name="Kramnik I."/>
            <person name="Agarwal A."/>
            <person name="Steyn A.J."/>
        </authorList>
    </citation>
    <scope>INDUCTION BY CARBON MONOXIDE (CO)</scope>
    <scope>DORMANCY REGULON</scope>
    <source>
        <strain>ATCC 25618 / H37Rv</strain>
    </source>
</reference>
<reference key="7">
    <citation type="journal article" date="2010" name="Tuberculosis">
        <title>Individual Mycobacterium tuberculosis universal stress protein homologues are dispensable in vitro.</title>
        <authorList>
            <person name="Hingley-Wilson S.M."/>
            <person name="Lougheed K.E."/>
            <person name="Ferguson K."/>
            <person name="Leiva S."/>
            <person name="Williams H.D."/>
        </authorList>
    </citation>
    <scope>DISRUPTION PHENOTYPE</scope>
    <source>
        <strain>ATCC 25618 / H37Rv</strain>
    </source>
</reference>
<reference key="8">
    <citation type="journal article" date="2011" name="Mol. Cell. Proteomics">
        <title>Proteogenomic analysis of Mycobacterium tuberculosis by high resolution mass spectrometry.</title>
        <authorList>
            <person name="Kelkar D.S."/>
            <person name="Kumar D."/>
            <person name="Kumar P."/>
            <person name="Balakrishnan L."/>
            <person name="Muthusamy B."/>
            <person name="Yadav A.K."/>
            <person name="Shrivastava P."/>
            <person name="Marimuthu A."/>
            <person name="Anand S."/>
            <person name="Sundaram H."/>
            <person name="Kingsbury R."/>
            <person name="Harsha H.C."/>
            <person name="Nair B."/>
            <person name="Prasad T.S."/>
            <person name="Chauhan D.S."/>
            <person name="Katoch K."/>
            <person name="Katoch V.M."/>
            <person name="Kumar P."/>
            <person name="Chaerkady R."/>
            <person name="Ramachandran S."/>
            <person name="Dash D."/>
            <person name="Pandey A."/>
        </authorList>
    </citation>
    <scope>IDENTIFICATION BY MASS SPECTROMETRY [LARGE SCALE ANALYSIS]</scope>
    <source>
        <strain>ATCC 25618 / H37Rv</strain>
    </source>
</reference>
<reference key="9">
    <citation type="journal article" date="2019" name="Microb. Pathog.">
        <title>Role of M.tuberculosis protein Rv2005c in the aminoglycosides resistance.</title>
        <authorList>
            <person name="Sharma D."/>
            <person name="Lata M."/>
            <person name="Faheem M."/>
            <person name="Khan A.U."/>
            <person name="Joshi B."/>
            <person name="Venkatesan K."/>
            <person name="Shukla S."/>
            <person name="Bisht D."/>
        </authorList>
    </citation>
    <scope>IDENTIFICATION BY MASS SPECTROMETRY</scope>
    <scope>FUNCTION</scope>
</reference>
<comment type="function">
    <text evidence="8">Probably involved in aminoglycosides resistance and virulence. Overexpression increases resistance to the aminoglycosides amikacin (AK) and kanamycin (KM).</text>
</comment>
<comment type="induction">
    <text evidence="2 3 4 5 6">A member of the dormancy regulon. Induced in response to reduced oxygen tension (hypoxia) (at protein level), low levels of nitric oxide (NO) and carbon monoxide (CO). It is hoped that this regulon will give insight into the latent, or dormant phase of infection.</text>
</comment>
<comment type="disruption phenotype">
    <text evidence="7">No visible phenotype under normal or hypoxic and normoxic stationary phase growth, nor in mouse- or human-derived macrophage cell lines.</text>
</comment>
<comment type="similarity">
    <text evidence="9">Belongs to the universal stress protein A family.</text>
</comment>
<keyword id="KW-0046">Antibiotic resistance</keyword>
<keyword id="KW-0067">ATP-binding</keyword>
<keyword id="KW-0547">Nucleotide-binding</keyword>
<keyword id="KW-1185">Reference proteome</keyword>
<protein>
    <recommendedName>
        <fullName>Universal stress protein Rv2005c</fullName>
        <shortName>USP Rv2005c</shortName>
    </recommendedName>
</protein>